<evidence type="ECO:0000250" key="1">
    <source>
        <dbReference type="UniProtKB" id="B5A5T4"/>
    </source>
</evidence>
<evidence type="ECO:0000255" key="2"/>
<evidence type="ECO:0000305" key="3"/>
<evidence type="ECO:0000312" key="4">
    <source>
        <dbReference type="EMBL" id="EDX06633.1"/>
    </source>
</evidence>
<dbReference type="EMBL" id="CM000362">
    <property type="protein sequence ID" value="EDX06633.1"/>
    <property type="status" value="ALT_SEQ"/>
    <property type="molecule type" value="Genomic_DNA"/>
</dbReference>
<dbReference type="STRING" id="7240.B4QBL6"/>
<dbReference type="OrthoDB" id="9991292at2759"/>
<dbReference type="ChiTaRS" id="qvr">
    <property type="organism name" value="fly"/>
</dbReference>
<dbReference type="Proteomes" id="UP000000304">
    <property type="component" value="Chromosome 2R"/>
</dbReference>
<dbReference type="GO" id="GO:0045121">
    <property type="term" value="C:membrane raft"/>
    <property type="evidence" value="ECO:0007669"/>
    <property type="project" value="UniProtKB-SubCell"/>
</dbReference>
<dbReference type="GO" id="GO:0005886">
    <property type="term" value="C:plasma membrane"/>
    <property type="evidence" value="ECO:0000250"/>
    <property type="project" value="UniProtKB"/>
</dbReference>
<dbReference type="GO" id="GO:0098552">
    <property type="term" value="C:side of membrane"/>
    <property type="evidence" value="ECO:0007669"/>
    <property type="project" value="UniProtKB-KW"/>
</dbReference>
<dbReference type="GO" id="GO:0034235">
    <property type="term" value="F:GPI anchor binding"/>
    <property type="evidence" value="ECO:0000250"/>
    <property type="project" value="UniProtKB"/>
</dbReference>
<dbReference type="GO" id="GO:0045187">
    <property type="term" value="P:regulation of circadian sleep/wake cycle, sleep"/>
    <property type="evidence" value="ECO:0000250"/>
    <property type="project" value="UniProtKB"/>
</dbReference>
<dbReference type="GO" id="GO:0032222">
    <property type="term" value="P:regulation of synaptic transmission, cholinergic"/>
    <property type="evidence" value="ECO:0007669"/>
    <property type="project" value="InterPro"/>
</dbReference>
<dbReference type="GO" id="GO:0048511">
    <property type="term" value="P:rhythmic process"/>
    <property type="evidence" value="ECO:0007669"/>
    <property type="project" value="UniProtKB-KW"/>
</dbReference>
<dbReference type="GO" id="GO:0030431">
    <property type="term" value="P:sleep"/>
    <property type="evidence" value="ECO:0007669"/>
    <property type="project" value="InterPro"/>
</dbReference>
<dbReference type="CDD" id="cd23595">
    <property type="entry name" value="TFP_LU_ECD_Qvr"/>
    <property type="match status" value="1"/>
</dbReference>
<dbReference type="InterPro" id="IPR031424">
    <property type="entry name" value="QVR-like"/>
</dbReference>
<dbReference type="InterPro" id="IPR050975">
    <property type="entry name" value="Sleep_regulator"/>
</dbReference>
<dbReference type="PANTHER" id="PTHR33562">
    <property type="entry name" value="ATILLA, ISOFORM B-RELATED-RELATED"/>
    <property type="match status" value="1"/>
</dbReference>
<dbReference type="PANTHER" id="PTHR33562:SF31">
    <property type="entry name" value="PROTEIN QUIVER"/>
    <property type="match status" value="1"/>
</dbReference>
<dbReference type="Pfam" id="PF17064">
    <property type="entry name" value="QVR"/>
    <property type="match status" value="1"/>
</dbReference>
<feature type="signal peptide" evidence="2">
    <location>
        <begin position="1"/>
        <end position="32"/>
    </location>
</feature>
<feature type="chain" id="PRO_0000365470" description="UPAR/Ly6 domain-containing protein qvr" evidence="2">
    <location>
        <begin position="33"/>
        <end position="127"/>
    </location>
</feature>
<feature type="propeptide" id="PRO_0000365471" description="Removed in mature form" evidence="1">
    <location>
        <begin position="128"/>
        <end position="158"/>
    </location>
</feature>
<feature type="transmembrane region" description="Helical" evidence="2">
    <location>
        <begin position="136"/>
        <end position="156"/>
    </location>
</feature>
<feature type="region of interest" description="Loop 1; may be required for cell surface localization or be essential for protein folding" evidence="1">
    <location>
        <begin position="54"/>
        <end position="67"/>
    </location>
</feature>
<feature type="region of interest" description="Loop 2; required for interaction with Sh/shaker and nAChRalpha3/Nicotinic acetylcholine receptor alpha3" evidence="1">
    <location>
        <begin position="77"/>
        <end position="91"/>
    </location>
</feature>
<feature type="lipid moiety-binding region" description="GPI-anchor amidated asparagine" evidence="1">
    <location>
        <position position="127"/>
    </location>
</feature>
<feature type="disulfide bond" evidence="1">
    <location>
        <begin position="41"/>
        <end position="75"/>
    </location>
</feature>
<feature type="disulfide bond" evidence="1">
    <location>
        <begin position="44"/>
        <end position="52"/>
    </location>
</feature>
<feature type="disulfide bond" evidence="1">
    <location>
        <begin position="71"/>
        <end position="93"/>
    </location>
</feature>
<feature type="disulfide bond" evidence="1">
    <location>
        <begin position="108"/>
        <end position="119"/>
    </location>
</feature>
<feature type="disulfide bond" evidence="1">
    <location>
        <begin position="121"/>
        <end position="126"/>
    </location>
</feature>
<gene>
    <name evidence="1" type="primary">qvr</name>
    <name evidence="1" type="synonym">sss</name>
    <name type="ORF">GD10799</name>
</gene>
<accession>B4QBL6</accession>
<sequence>MWTQRNAVGNWLLVLTAVIGFLTFIWIPQTSAECQTRSIYCYECDSWTDARCKDPFHYTALPRDQPPLMTCNGCCVKMVRHQRSRYEVVRRMCTSQLQINLFMVDHVCMMESSGNGHMCFCEEDMCNSSKNLHTNGCQLHLIPIAVAVSWLMGQLLSR</sequence>
<reference evidence="4" key="1">
    <citation type="journal article" date="2007" name="Nature">
        <title>Evolution of genes and genomes on the Drosophila phylogeny.</title>
        <authorList>
            <consortium name="Drosophila 12 genomes consortium"/>
        </authorList>
    </citation>
    <scope>NUCLEOTIDE SEQUENCE [LARGE SCALE GENOMIC DNA]</scope>
</reference>
<name>QVR_DROSI</name>
<keyword id="KW-0090">Biological rhythms</keyword>
<keyword id="KW-1003">Cell membrane</keyword>
<keyword id="KW-1015">Disulfide bond</keyword>
<keyword id="KW-0325">Glycoprotein</keyword>
<keyword id="KW-0336">GPI-anchor</keyword>
<keyword id="KW-0449">Lipoprotein</keyword>
<keyword id="KW-0472">Membrane</keyword>
<keyword id="KW-1185">Reference proteome</keyword>
<keyword id="KW-0732">Signal</keyword>
<keyword id="KW-0812">Transmembrane</keyword>
<keyword id="KW-1133">Transmembrane helix</keyword>
<organism>
    <name type="scientific">Drosophila simulans</name>
    <name type="common">Fruit fly</name>
    <dbReference type="NCBI Taxonomy" id="7240"/>
    <lineage>
        <taxon>Eukaryota</taxon>
        <taxon>Metazoa</taxon>
        <taxon>Ecdysozoa</taxon>
        <taxon>Arthropoda</taxon>
        <taxon>Hexapoda</taxon>
        <taxon>Insecta</taxon>
        <taxon>Pterygota</taxon>
        <taxon>Neoptera</taxon>
        <taxon>Endopterygota</taxon>
        <taxon>Diptera</taxon>
        <taxon>Brachycera</taxon>
        <taxon>Muscomorpha</taxon>
        <taxon>Ephydroidea</taxon>
        <taxon>Drosophilidae</taxon>
        <taxon>Drosophila</taxon>
        <taxon>Sophophora</taxon>
    </lineage>
</organism>
<comment type="function">
    <text evidence="1">Bifunctional regulator of neuronal activity in the mushroom body, and possibly other regions of the brain, that acts as a signaling molecule required for homeostatic regulation of sleep under normal conditions and after sleep deprivation. Reduces neuronal excitability by enhancing Sh/shaker K(+) channel activity; possibly by stabilizing Sh/shaker to increase protein levels, accelerating its activation kinetics, slowing C-type inactivation and enhancing recovery from inactivation. Specifically affects the A-type K(+) current. Antagonizes nicotinic acetylcholine receptors (nAChRs) to reduce synaptic transmission, possibly by preventing their localization to the cell surface. Required for regulation of neuromuscular excitability and plasticity at neuromuscular junctions.</text>
</comment>
<comment type="subunit">
    <text evidence="1">Interacts (via loop 2 of the three-fingered Ly-6 domain) with Sh/shaker; this interaction may stabilize both components of the complex and may be required for targeting or retention of Sh/shaker to neural cell projections. Interacts (via loop 2 of the three-fingered Ly-6 domain) with nAChRalpha3 and potentially other nicotinic acetylcholine receptors; this interaction is required for antagonism of nicotinic acetylcholine receptors.</text>
</comment>
<comment type="subcellular location">
    <subcellularLocation>
        <location evidence="1">Cell membrane</location>
        <topology evidence="1">Lipid-anchor</topology>
        <topology evidence="1">GPI-anchor</topology>
        <orientation evidence="1">Extracellular side</orientation>
    </subcellularLocation>
    <subcellularLocation>
        <location evidence="1">Membrane raft</location>
        <topology evidence="1">Lipid-anchor</topology>
        <topology evidence="1">GPI-anchor</topology>
        <orientation evidence="1">Extracellular side</orientation>
    </subcellularLocation>
</comment>
<comment type="tissue specificity">
    <text evidence="1">Expressed in mushroom body (at protein level); overlaps with expression of Sh/shaker and nicotinic acetylcholine receptor (nAChR) components also involved in sleep regulation. Expressed in the adult brain and head. Enriched in the mushroom body, anterior optic tubercle, superior protocerebrum, antennal nerve and visual projection neuron fibers projecting into the lobula plate of the optic lobe.</text>
</comment>
<comment type="domain">
    <text evidence="1">Consists of a single Ly-6 domain, adopting a three finger fold stabilized by 5 disulfide bonds. The first loop contains a region essential for protein folding or that is required for localization to the cell surface. The second loop mediates protein-protein interactions.</text>
</comment>
<comment type="similarity">
    <text evidence="3">Belongs to the quiver family.</text>
</comment>
<comment type="sequence caution" evidence="3">
    <conflict type="erroneous gene model prediction">
        <sequence resource="EMBL-CDS" id="EDX06633"/>
    </conflict>
</comment>
<protein>
    <recommendedName>
        <fullName evidence="1">UPAR/Ly6 domain-containing protein qvr</fullName>
    </recommendedName>
    <alternativeName>
        <fullName evidence="1">Protein quiver</fullName>
    </alternativeName>
    <alternativeName>
        <fullName evidence="1">Protein sleepless</fullName>
    </alternativeName>
</protein>
<proteinExistence type="inferred from homology"/>